<reference key="1">
    <citation type="journal article" date="2006" name="Virology">
        <title>Sequence and organization of the Trichoplusia ni ascovirus 2c (Ascoviridae) genome.</title>
        <authorList>
            <person name="Wang L."/>
            <person name="Xue J."/>
            <person name="Seaborn C.P."/>
            <person name="Arif B.M."/>
            <person name="Cheng X.W."/>
        </authorList>
    </citation>
    <scope>NUCLEOTIDE SEQUENCE [LARGE SCALE GENOMIC DNA]</scope>
</reference>
<reference key="2">
    <citation type="journal article" date="2007" name="J. Gen. Virol.">
        <title>Identification of Trichoplusia ni ascovirus 2c virion structural proteins.</title>
        <authorList>
            <person name="Cui L."/>
            <person name="Cheng X."/>
            <person name="Li L."/>
            <person name="Li J."/>
        </authorList>
    </citation>
    <scope>IDENTIFICATION BY MASS SPECTROMETRY</scope>
</reference>
<feature type="chain" id="PRO_0000330595" description="Structural protein ORF43">
    <location>
        <begin position="1"/>
        <end position="977"/>
    </location>
</feature>
<feature type="region of interest" description="Disordered" evidence="1">
    <location>
        <begin position="531"/>
        <end position="556"/>
    </location>
</feature>
<protein>
    <recommendedName>
        <fullName>Structural protein ORF43</fullName>
    </recommendedName>
</protein>
<accession>Q06VN8</accession>
<organismHost>
    <name type="scientific">Noctuidae</name>
    <name type="common">owlet moths</name>
    <dbReference type="NCBI Taxonomy" id="7100"/>
</organismHost>
<dbReference type="EMBL" id="DQ517337">
    <property type="protein sequence ID" value="ABF70560.1"/>
    <property type="molecule type" value="Genomic_DNA"/>
</dbReference>
<dbReference type="RefSeq" id="YP_803266.1">
    <property type="nucleotide sequence ID" value="NC_008518.1"/>
</dbReference>
<dbReference type="KEGG" id="vg:5141803"/>
<dbReference type="OrthoDB" id="1424at10239"/>
<dbReference type="Proteomes" id="UP000001323">
    <property type="component" value="Genome"/>
</dbReference>
<dbReference type="GO" id="GO:0044423">
    <property type="term" value="C:virion component"/>
    <property type="evidence" value="ECO:0007669"/>
    <property type="project" value="UniProtKB-KW"/>
</dbReference>
<dbReference type="InterPro" id="IPR043920">
    <property type="entry name" value="DUF5757"/>
</dbReference>
<dbReference type="Pfam" id="PF19061">
    <property type="entry name" value="DUF5757"/>
    <property type="match status" value="1"/>
</dbReference>
<gene>
    <name type="ORF">ORF43</name>
</gene>
<organism>
    <name type="scientific">Trichoplusia ni ascovirus 2c</name>
    <name type="common">TnAV-2c</name>
    <dbReference type="NCBI Taxonomy" id="328615"/>
    <lineage>
        <taxon>Viruses</taxon>
        <taxon>Varidnaviria</taxon>
        <taxon>Bamfordvirae</taxon>
        <taxon>Nucleocytoviricota</taxon>
        <taxon>Megaviricetes</taxon>
        <taxon>Pimascovirales</taxon>
        <taxon>Ascoviridae</taxon>
        <taxon>Ascovirus</taxon>
    </lineage>
</organism>
<evidence type="ECO:0000256" key="1">
    <source>
        <dbReference type="SAM" id="MobiDB-lite"/>
    </source>
</evidence>
<evidence type="ECO:0000305" key="2"/>
<proteinExistence type="evidence at protein level"/>
<name>Y043_TNAVC</name>
<comment type="subcellular location">
    <subcellularLocation>
        <location>Virion</location>
    </subcellularLocation>
</comment>
<comment type="similarity">
    <text evidence="2">Belongs to the ascovirus HvAV ORF146 family.</text>
</comment>
<sequence>MTIKRNGYNEYISMSSNSSPLLLYDIISLTNGSNDNEIIINFRSHVLNSNIIELLSGAAPHYFDVRNILVRNMESQKIGASFTINSITFVSEYMQYFVLNGNENLPNVYIDERGVVAYRKVWRRFTLGSPMFVFDYDGKLVKFTIAVERAKEGITVSSILHTRVRILDANSEDDIAFISEAIVTMMIYYKNSELEISQYYAENLYDELPRVRVLRDSKRIRNKTARRIRTTSINDIRTVIPVNNYARQCNRLPMLVDSIDDVPTELRGNTIKFPLHGEGGIDKPKYVYCRYSDAPYPGMMVNNLAGASKKFPYLPCCYKTSQEVKDVNLAYSRDVMPEVSSVAPNRVQIYFNTQRLLPCNSFGRSPMCIEKFITGINYFDDRLHDDDDNDSVSEYYPTISKVTDDVNASTYYCIRGGVQKGPNSIIEAVLRSLQYLDGRDPRTLSITDSILNSERLKLRDCINVSAQELYDIPFDKRLDILSSTQTYLDGFRFVKALQYQYDVNIYIYSRNCGPVTRFIYNHNEISLKFEDNDNINKQQQQQRERNDDDDDDDDSTLVLPYHNKSSAYIDTKIHRKSIVIYIHHGTEATTNATGYPHVEYIMFRKHKKVVEKLWDVYKAMLPVNITNVYGLSYYEADNDDINETISKRVAENCRKKLYVSTGKLLKLVGENNDGDDDDSFIPKLQVLDRLGKCVQLDEYRISSLSDFIEPLPLPIVNENMFYNNPSCLTQCYGFDAAFKVDRLSRLLLYITLYEMTLTGSITSVYFTINRQRFSELICDSGCVGKLLNNGCVTLQKYTHHLVSRTTTTTTTISPSISQEDHENNIDDSNITYILVDSSDTAKRLKYNATLLIKRMTAKEIDNLKLSTHVLPLLRYERDFALSNTSHDNMVVVTSMDKFTTKSFDHRYIYKIPSTIIPNIGESLVLITNESKEQTELVTVTSIENFTRIHDHYENSDAIQFKCVVNVWSGASTWKKSV</sequence>
<keyword id="KW-1185">Reference proteome</keyword>
<keyword id="KW-0946">Virion</keyword>